<accession>Q723B1</accession>
<keyword id="KW-0423">Lactose metabolism</keyword>
<keyword id="KW-0456">Lyase</keyword>
<comment type="catalytic activity">
    <reaction evidence="1">
        <text>D-tagatofuranose 1,6-bisphosphate = D-glyceraldehyde 3-phosphate + dihydroxyacetone phosphate</text>
        <dbReference type="Rhea" id="RHEA:22948"/>
        <dbReference type="ChEBI" id="CHEBI:57642"/>
        <dbReference type="ChEBI" id="CHEBI:58694"/>
        <dbReference type="ChEBI" id="CHEBI:59776"/>
        <dbReference type="EC" id="4.1.2.40"/>
    </reaction>
</comment>
<comment type="pathway">
    <text evidence="1">Carbohydrate metabolism; D-tagatose 6-phosphate degradation; D-glyceraldehyde 3-phosphate and glycerone phosphate from D-tagatose 6-phosphate: step 2/2.</text>
</comment>
<comment type="similarity">
    <text evidence="1">Belongs to the aldolase LacD family.</text>
</comment>
<evidence type="ECO:0000255" key="1">
    <source>
        <dbReference type="HAMAP-Rule" id="MF_00734"/>
    </source>
</evidence>
<reference key="1">
    <citation type="journal article" date="2004" name="Nucleic Acids Res.">
        <title>Whole genome comparisons of serotype 4b and 1/2a strains of the food-borne pathogen Listeria monocytogenes reveal new insights into the core genome components of this species.</title>
        <authorList>
            <person name="Nelson K.E."/>
            <person name="Fouts D.E."/>
            <person name="Mongodin E.F."/>
            <person name="Ravel J."/>
            <person name="DeBoy R.T."/>
            <person name="Kolonay J.F."/>
            <person name="Rasko D.A."/>
            <person name="Angiuoli S.V."/>
            <person name="Gill S.R."/>
            <person name="Paulsen I.T."/>
            <person name="Peterson J.D."/>
            <person name="White O."/>
            <person name="Nelson W.C."/>
            <person name="Nierman W.C."/>
            <person name="Beanan M.J."/>
            <person name="Brinkac L.M."/>
            <person name="Daugherty S.C."/>
            <person name="Dodson R.J."/>
            <person name="Durkin A.S."/>
            <person name="Madupu R."/>
            <person name="Haft D.H."/>
            <person name="Selengut J."/>
            <person name="Van Aken S.E."/>
            <person name="Khouri H.M."/>
            <person name="Fedorova N."/>
            <person name="Forberger H.A."/>
            <person name="Tran B."/>
            <person name="Kathariou S."/>
            <person name="Wonderling L.D."/>
            <person name="Uhlich G.A."/>
            <person name="Bayles D.O."/>
            <person name="Luchansky J.B."/>
            <person name="Fraser C.M."/>
        </authorList>
    </citation>
    <scope>NUCLEOTIDE SEQUENCE [LARGE SCALE GENOMIC DNA]</scope>
    <source>
        <strain>F2365</strain>
    </source>
</reference>
<gene>
    <name evidence="1" type="primary">lacD</name>
    <name type="ordered locus">LMOf2365_0568</name>
</gene>
<feature type="chain" id="PRO_0000203942" description="Tagatose 1,6-diphosphate aldolase">
    <location>
        <begin position="1"/>
        <end position="338"/>
    </location>
</feature>
<protein>
    <recommendedName>
        <fullName evidence="1">Tagatose 1,6-diphosphate aldolase</fullName>
        <ecNumber evidence="1">4.1.2.40</ecNumber>
    </recommendedName>
    <alternativeName>
        <fullName evidence="1">D-tagatose-1,6-bisphosphate aldolase</fullName>
    </alternativeName>
    <alternativeName>
        <fullName evidence="1">Tagatose-bisphosphate aldolase</fullName>
    </alternativeName>
</protein>
<name>LACD_LISMF</name>
<organism>
    <name type="scientific">Listeria monocytogenes serotype 4b (strain F2365)</name>
    <dbReference type="NCBI Taxonomy" id="265669"/>
    <lineage>
        <taxon>Bacteria</taxon>
        <taxon>Bacillati</taxon>
        <taxon>Bacillota</taxon>
        <taxon>Bacilli</taxon>
        <taxon>Bacillales</taxon>
        <taxon>Listeriaceae</taxon>
        <taxon>Listeria</taxon>
    </lineage>
</organism>
<sequence length="338" mass="37698">MVQITKGKFDGLQRLSNEKGVIAALAIDQRGSLKKMIQQAKGTENKKDVEDFKQLVSEELTPYASAILLDLEYGTPAIKARHEGSGLLTSYEKTGYDATTPGKLPDLIEDLSALRIKENGGDAVKILVYYDPDEPAEINEIKYAFLERIGAECRAVDIPFFLEPITYDATVTDSGSLEYAKLKPAKVKASIKEFSKPRYGVDVLKLEVPVNFKYVEGFAEGEVAYTQDEAARHFEECSDLSPLPFIYLSAGVTSEMFHKTIQFANQHNVQYSGVLCGRATWADGIEVYGKQGDDALREWLRTQGKENITSLDKLLDEGAVPWWTKYGSFEDVHVVEKQ</sequence>
<dbReference type="EC" id="4.1.2.40" evidence="1"/>
<dbReference type="EMBL" id="AE017262">
    <property type="protein sequence ID" value="AAT03350.1"/>
    <property type="molecule type" value="Genomic_DNA"/>
</dbReference>
<dbReference type="RefSeq" id="WP_003725443.1">
    <property type="nucleotide sequence ID" value="NC_002973.6"/>
</dbReference>
<dbReference type="SMR" id="Q723B1"/>
<dbReference type="KEGG" id="lmf:LMOf2365_0568"/>
<dbReference type="HOGENOM" id="CLU_058971_0_1_9"/>
<dbReference type="UniPathway" id="UPA00704">
    <property type="reaction ID" value="UER00716"/>
</dbReference>
<dbReference type="GO" id="GO:0061595">
    <property type="term" value="F:6-deoxy-6-sulfofructose-1-phosphate aldolase activity"/>
    <property type="evidence" value="ECO:0007669"/>
    <property type="project" value="TreeGrafter"/>
</dbReference>
<dbReference type="GO" id="GO:0009024">
    <property type="term" value="F:tagatose-6-phosphate kinase activity"/>
    <property type="evidence" value="ECO:0007669"/>
    <property type="project" value="InterPro"/>
</dbReference>
<dbReference type="GO" id="GO:0009025">
    <property type="term" value="F:tagatose-bisphosphate aldolase activity"/>
    <property type="evidence" value="ECO:0007669"/>
    <property type="project" value="UniProtKB-UniRule"/>
</dbReference>
<dbReference type="GO" id="GO:1902777">
    <property type="term" value="P:6-sulfoquinovose(1-) catabolic process"/>
    <property type="evidence" value="ECO:0007669"/>
    <property type="project" value="TreeGrafter"/>
</dbReference>
<dbReference type="GO" id="GO:2001059">
    <property type="term" value="P:D-tagatose 6-phosphate catabolic process"/>
    <property type="evidence" value="ECO:0007669"/>
    <property type="project" value="UniProtKB-UniRule"/>
</dbReference>
<dbReference type="GO" id="GO:0019512">
    <property type="term" value="P:lactose catabolic process via tagatose-6-phosphate"/>
    <property type="evidence" value="ECO:0007669"/>
    <property type="project" value="InterPro"/>
</dbReference>
<dbReference type="FunFam" id="3.20.20.70:FF:000137">
    <property type="entry name" value="Tagatose 1,6-diphosphate aldolase 2"/>
    <property type="match status" value="1"/>
</dbReference>
<dbReference type="Gene3D" id="3.20.20.70">
    <property type="entry name" value="Aldolase class I"/>
    <property type="match status" value="1"/>
</dbReference>
<dbReference type="HAMAP" id="MF_00734">
    <property type="entry name" value="LacD"/>
    <property type="match status" value="1"/>
</dbReference>
<dbReference type="InterPro" id="IPR013785">
    <property type="entry name" value="Aldolase_TIM"/>
</dbReference>
<dbReference type="InterPro" id="IPR002915">
    <property type="entry name" value="DeoC/FbaB/LacD_aldolase"/>
</dbReference>
<dbReference type="InterPro" id="IPR050552">
    <property type="entry name" value="LacD_aldolase"/>
</dbReference>
<dbReference type="InterPro" id="IPR005927">
    <property type="entry name" value="Tag_1.6-dipho_adolase"/>
</dbReference>
<dbReference type="NCBIfam" id="NF009065">
    <property type="entry name" value="PRK12399.1"/>
    <property type="match status" value="1"/>
</dbReference>
<dbReference type="NCBIfam" id="NF009498">
    <property type="entry name" value="PRK12858.1"/>
    <property type="match status" value="1"/>
</dbReference>
<dbReference type="PANTHER" id="PTHR39340">
    <property type="entry name" value="SULFOFRUCTOSEPHOSPHATE ALDOLASE"/>
    <property type="match status" value="1"/>
</dbReference>
<dbReference type="PANTHER" id="PTHR39340:SF1">
    <property type="entry name" value="SULFOFRUCTOSEPHOSPHATE ALDOLASE"/>
    <property type="match status" value="1"/>
</dbReference>
<dbReference type="Pfam" id="PF01791">
    <property type="entry name" value="DeoC"/>
    <property type="match status" value="1"/>
</dbReference>
<dbReference type="SMART" id="SM01133">
    <property type="entry name" value="DeoC"/>
    <property type="match status" value="1"/>
</dbReference>
<dbReference type="SUPFAM" id="SSF51569">
    <property type="entry name" value="Aldolase"/>
    <property type="match status" value="1"/>
</dbReference>
<proteinExistence type="inferred from homology"/>